<gene>
    <name evidence="4" type="primary">RXLR122</name>
</gene>
<comment type="function">
    <text evidence="3">Secreted effector that acts as an elicitor that induces cell death in host plant cells.</text>
</comment>
<comment type="subcellular location">
    <subcellularLocation>
        <location evidence="3">Secreted</location>
    </subcellularLocation>
    <subcellularLocation>
        <location evidence="3">Host nucleus</location>
    </subcellularLocation>
</comment>
<comment type="domain">
    <text evidence="6">The RxLR-dEER motif acts to carry the protein into the host cell cytoplasm through binding to cell surface phosphatidylinositol-3-phosphate.</text>
</comment>
<comment type="similarity">
    <text evidence="5">Belongs to the RxLR effector family.</text>
</comment>
<keyword id="KW-1048">Host nucleus</keyword>
<keyword id="KW-0964">Secreted</keyword>
<keyword id="KW-0732">Signal</keyword>
<keyword id="KW-0843">Virulence</keyword>
<evidence type="ECO:0000255" key="1"/>
<evidence type="ECO:0000256" key="2">
    <source>
        <dbReference type="SAM" id="MobiDB-lite"/>
    </source>
</evidence>
<evidence type="ECO:0000269" key="3">
    <source>
    </source>
</evidence>
<evidence type="ECO:0000303" key="4">
    <source>
    </source>
</evidence>
<evidence type="ECO:0000305" key="5"/>
<evidence type="ECO:0000305" key="6">
    <source>
    </source>
</evidence>
<reference key="1">
    <citation type="journal article" date="2018" name="Front. Plant Sci.">
        <title>In planta functional analysis and subcellular localization of the oomycete pathogen Plasmopara viticola candidate RXLR effector repertoire.</title>
        <authorList>
            <person name="Liu Y."/>
            <person name="Lan X."/>
            <person name="Song S."/>
            <person name="Yin L."/>
            <person name="Dry I.B."/>
            <person name="Qu J."/>
            <person name="Xiang J."/>
            <person name="Lu J."/>
        </authorList>
    </citation>
    <scope>NUCLEOTIDE SEQUENCE [MRNA]</scope>
    <scope>DOMAIN</scope>
    <scope>FUNCTION</scope>
    <scope>SUBCELLULAR LOCATION</scope>
</reference>
<accession>P0CV50</accession>
<feature type="signal peptide" evidence="1">
    <location>
        <begin position="1"/>
        <end position="21"/>
    </location>
</feature>
<feature type="chain" id="PRO_0000447959" description="Secreted RxLR effector protein 122">
    <location>
        <begin position="22"/>
        <end position="352"/>
    </location>
</feature>
<feature type="region of interest" description="Disordered" evidence="2">
    <location>
        <begin position="280"/>
        <end position="352"/>
    </location>
</feature>
<feature type="short sequence motif" description="RxLR-dEER" evidence="6">
    <location>
        <begin position="48"/>
        <end position="65"/>
    </location>
</feature>
<feature type="compositionally biased region" description="Low complexity" evidence="2">
    <location>
        <begin position="280"/>
        <end position="290"/>
    </location>
</feature>
<feature type="compositionally biased region" description="Polar residues" evidence="2">
    <location>
        <begin position="302"/>
        <end position="315"/>
    </location>
</feature>
<dbReference type="SMR" id="P0CV50"/>
<dbReference type="GO" id="GO:0005576">
    <property type="term" value="C:extracellular region"/>
    <property type="evidence" value="ECO:0007669"/>
    <property type="project" value="UniProtKB-SubCell"/>
</dbReference>
<dbReference type="GO" id="GO:0042025">
    <property type="term" value="C:host cell nucleus"/>
    <property type="evidence" value="ECO:0007669"/>
    <property type="project" value="UniProtKB-SubCell"/>
</dbReference>
<name>RL122_PLAVT</name>
<proteinExistence type="evidence at transcript level"/>
<organism>
    <name type="scientific">Plasmopara viticola</name>
    <name type="common">Downy mildew of grapevine</name>
    <name type="synonym">Botrytis viticola</name>
    <dbReference type="NCBI Taxonomy" id="143451"/>
    <lineage>
        <taxon>Eukaryota</taxon>
        <taxon>Sar</taxon>
        <taxon>Stramenopiles</taxon>
        <taxon>Oomycota</taxon>
        <taxon>Peronosporales</taxon>
        <taxon>Peronosporaceae</taxon>
        <taxon>Plasmopara</taxon>
    </lineage>
</organism>
<sequence length="352" mass="39609">MRGAYYVLIALLVVASSQTSAESGHQLQVYDHDFVAADTAAATTLPRQFLRGSRNVPGDLAHEERAITSELVEEGAKLIPRAAENVEEISRVAEAVGKRPRVAEEDVLNKASGANEAFKKPRNTATDDAFQGISTEQLLPLSYKQWDTEIKSMRIPKPEKYQNNIQSVYDAFVDVCDEDLKPTISETARLWNLFDRSFKPLTTRLHQQALAQFAKEYVLRDELRLKTEWARMNERTMPNRAGMLNMKLNWHFQRWVRMYNKFGERRSELIGTPLNVARSRGGTTGASRGTALHRHSIVPLNAASTSKGKSSVFTERSQRTFDDNTDIASPPSKHIKGQSSELVEPEGHRSKP</sequence>
<protein>
    <recommendedName>
        <fullName evidence="4">Secreted RxLR effector protein 122</fullName>
    </recommendedName>
</protein>